<proteinExistence type="inferred from homology"/>
<protein>
    <recommendedName>
        <fullName evidence="1">3-dehydroquinate dehydratase</fullName>
        <shortName evidence="1">3-dehydroquinase</shortName>
        <ecNumber evidence="1">4.2.1.10</ecNumber>
    </recommendedName>
    <alternativeName>
        <fullName evidence="1">Type II DHQase</fullName>
    </alternativeName>
</protein>
<reference key="1">
    <citation type="submission" date="2006-08" db="EMBL/GenBank/DDBJ databases">
        <title>Complete sequence of Shewanella frigidimarina NCIMB 400.</title>
        <authorList>
            <consortium name="US DOE Joint Genome Institute"/>
            <person name="Copeland A."/>
            <person name="Lucas S."/>
            <person name="Lapidus A."/>
            <person name="Barry K."/>
            <person name="Detter J.C."/>
            <person name="Glavina del Rio T."/>
            <person name="Hammon N."/>
            <person name="Israni S."/>
            <person name="Dalin E."/>
            <person name="Tice H."/>
            <person name="Pitluck S."/>
            <person name="Fredrickson J.K."/>
            <person name="Kolker E."/>
            <person name="McCuel L.A."/>
            <person name="DiChristina T."/>
            <person name="Nealson K.H."/>
            <person name="Newman D."/>
            <person name="Tiedje J.M."/>
            <person name="Zhou J."/>
            <person name="Romine M.F."/>
            <person name="Culley D.E."/>
            <person name="Serres M."/>
            <person name="Chertkov O."/>
            <person name="Brettin T."/>
            <person name="Bruce D."/>
            <person name="Han C."/>
            <person name="Tapia R."/>
            <person name="Gilna P."/>
            <person name="Schmutz J."/>
            <person name="Larimer F."/>
            <person name="Land M."/>
            <person name="Hauser L."/>
            <person name="Kyrpides N."/>
            <person name="Mikhailova N."/>
            <person name="Richardson P."/>
        </authorList>
    </citation>
    <scope>NUCLEOTIDE SEQUENCE [LARGE SCALE GENOMIC DNA]</scope>
    <source>
        <strain>NCIMB 400</strain>
    </source>
</reference>
<gene>
    <name evidence="1" type="primary">aroQ</name>
    <name type="ordered locus">Sfri_3593</name>
</gene>
<feature type="chain" id="PRO_1000097620" description="3-dehydroquinate dehydratase">
    <location>
        <begin position="1"/>
        <end position="148"/>
    </location>
</feature>
<feature type="active site" description="Proton acceptor" evidence="1">
    <location>
        <position position="26"/>
    </location>
</feature>
<feature type="active site" description="Proton donor" evidence="1">
    <location>
        <position position="101"/>
    </location>
</feature>
<feature type="binding site" evidence="1">
    <location>
        <position position="75"/>
    </location>
    <ligand>
        <name>substrate</name>
    </ligand>
</feature>
<feature type="binding site" evidence="1">
    <location>
        <position position="81"/>
    </location>
    <ligand>
        <name>substrate</name>
    </ligand>
</feature>
<feature type="binding site" evidence="1">
    <location>
        <position position="88"/>
    </location>
    <ligand>
        <name>substrate</name>
    </ligand>
</feature>
<feature type="binding site" evidence="1">
    <location>
        <begin position="102"/>
        <end position="103"/>
    </location>
    <ligand>
        <name>substrate</name>
    </ligand>
</feature>
<feature type="binding site" evidence="1">
    <location>
        <position position="112"/>
    </location>
    <ligand>
        <name>substrate</name>
    </ligand>
</feature>
<feature type="site" description="Transition state stabilizer" evidence="1">
    <location>
        <position position="21"/>
    </location>
</feature>
<name>AROQ_SHEFN</name>
<sequence>MSQTAKVLLINGPNLNLLGRREPGHYGHQTLTTIVDELTRNATQAGVTLEHIQSNAEYQLIDAIHATDAQFIIINPAAFTHTSVALRDAILGVAIPFIEVHLSNVHAREPFRHHSYFSDKALGVICGLGAQGYDFALQAAIKHLSDKH</sequence>
<comment type="function">
    <text evidence="1">Catalyzes a trans-dehydration via an enolate intermediate.</text>
</comment>
<comment type="catalytic activity">
    <reaction evidence="1">
        <text>3-dehydroquinate = 3-dehydroshikimate + H2O</text>
        <dbReference type="Rhea" id="RHEA:21096"/>
        <dbReference type="ChEBI" id="CHEBI:15377"/>
        <dbReference type="ChEBI" id="CHEBI:16630"/>
        <dbReference type="ChEBI" id="CHEBI:32364"/>
        <dbReference type="EC" id="4.2.1.10"/>
    </reaction>
</comment>
<comment type="pathway">
    <text evidence="1">Metabolic intermediate biosynthesis; chorismate biosynthesis; chorismate from D-erythrose 4-phosphate and phosphoenolpyruvate: step 3/7.</text>
</comment>
<comment type="subunit">
    <text evidence="1">Homododecamer.</text>
</comment>
<comment type="similarity">
    <text evidence="1">Belongs to the type-II 3-dehydroquinase family.</text>
</comment>
<evidence type="ECO:0000255" key="1">
    <source>
        <dbReference type="HAMAP-Rule" id="MF_00169"/>
    </source>
</evidence>
<dbReference type="EC" id="4.2.1.10" evidence="1"/>
<dbReference type="EMBL" id="CP000447">
    <property type="protein sequence ID" value="ABI73420.1"/>
    <property type="molecule type" value="Genomic_DNA"/>
</dbReference>
<dbReference type="RefSeq" id="WP_011639010.1">
    <property type="nucleotide sequence ID" value="NC_008345.1"/>
</dbReference>
<dbReference type="SMR" id="Q07X44"/>
<dbReference type="STRING" id="318167.Sfri_3593"/>
<dbReference type="KEGG" id="sfr:Sfri_3593"/>
<dbReference type="eggNOG" id="COG0757">
    <property type="taxonomic scope" value="Bacteria"/>
</dbReference>
<dbReference type="HOGENOM" id="CLU_090968_1_0_6"/>
<dbReference type="OrthoDB" id="9790793at2"/>
<dbReference type="UniPathway" id="UPA00053">
    <property type="reaction ID" value="UER00086"/>
</dbReference>
<dbReference type="Proteomes" id="UP000000684">
    <property type="component" value="Chromosome"/>
</dbReference>
<dbReference type="GO" id="GO:0003855">
    <property type="term" value="F:3-dehydroquinate dehydratase activity"/>
    <property type="evidence" value="ECO:0007669"/>
    <property type="project" value="UniProtKB-UniRule"/>
</dbReference>
<dbReference type="GO" id="GO:0008652">
    <property type="term" value="P:amino acid biosynthetic process"/>
    <property type="evidence" value="ECO:0007669"/>
    <property type="project" value="UniProtKB-KW"/>
</dbReference>
<dbReference type="GO" id="GO:0009073">
    <property type="term" value="P:aromatic amino acid family biosynthetic process"/>
    <property type="evidence" value="ECO:0007669"/>
    <property type="project" value="UniProtKB-KW"/>
</dbReference>
<dbReference type="GO" id="GO:0009423">
    <property type="term" value="P:chorismate biosynthetic process"/>
    <property type="evidence" value="ECO:0007669"/>
    <property type="project" value="UniProtKB-UniRule"/>
</dbReference>
<dbReference type="GO" id="GO:0019631">
    <property type="term" value="P:quinate catabolic process"/>
    <property type="evidence" value="ECO:0007669"/>
    <property type="project" value="TreeGrafter"/>
</dbReference>
<dbReference type="CDD" id="cd00466">
    <property type="entry name" value="DHQase_II"/>
    <property type="match status" value="1"/>
</dbReference>
<dbReference type="Gene3D" id="3.40.50.9100">
    <property type="entry name" value="Dehydroquinase, class II"/>
    <property type="match status" value="1"/>
</dbReference>
<dbReference type="HAMAP" id="MF_00169">
    <property type="entry name" value="AroQ"/>
    <property type="match status" value="1"/>
</dbReference>
<dbReference type="InterPro" id="IPR001874">
    <property type="entry name" value="DHquinase_II"/>
</dbReference>
<dbReference type="InterPro" id="IPR018509">
    <property type="entry name" value="DHquinase_II_CS"/>
</dbReference>
<dbReference type="InterPro" id="IPR036441">
    <property type="entry name" value="DHquinase_II_sf"/>
</dbReference>
<dbReference type="NCBIfam" id="TIGR01088">
    <property type="entry name" value="aroQ"/>
    <property type="match status" value="1"/>
</dbReference>
<dbReference type="NCBIfam" id="NF003804">
    <property type="entry name" value="PRK05395.1-1"/>
    <property type="match status" value="1"/>
</dbReference>
<dbReference type="NCBIfam" id="NF003805">
    <property type="entry name" value="PRK05395.1-2"/>
    <property type="match status" value="1"/>
</dbReference>
<dbReference type="NCBIfam" id="NF003806">
    <property type="entry name" value="PRK05395.1-3"/>
    <property type="match status" value="1"/>
</dbReference>
<dbReference type="NCBIfam" id="NF003807">
    <property type="entry name" value="PRK05395.1-4"/>
    <property type="match status" value="1"/>
</dbReference>
<dbReference type="PANTHER" id="PTHR21272">
    <property type="entry name" value="CATABOLIC 3-DEHYDROQUINASE"/>
    <property type="match status" value="1"/>
</dbReference>
<dbReference type="PANTHER" id="PTHR21272:SF3">
    <property type="entry name" value="CATABOLIC 3-DEHYDROQUINASE"/>
    <property type="match status" value="1"/>
</dbReference>
<dbReference type="Pfam" id="PF01220">
    <property type="entry name" value="DHquinase_II"/>
    <property type="match status" value="1"/>
</dbReference>
<dbReference type="PIRSF" id="PIRSF001399">
    <property type="entry name" value="DHquinase_II"/>
    <property type="match status" value="1"/>
</dbReference>
<dbReference type="SUPFAM" id="SSF52304">
    <property type="entry name" value="Type II 3-dehydroquinate dehydratase"/>
    <property type="match status" value="1"/>
</dbReference>
<dbReference type="PROSITE" id="PS01029">
    <property type="entry name" value="DEHYDROQUINASE_II"/>
    <property type="match status" value="1"/>
</dbReference>
<organism>
    <name type="scientific">Shewanella frigidimarina (strain NCIMB 400)</name>
    <dbReference type="NCBI Taxonomy" id="318167"/>
    <lineage>
        <taxon>Bacteria</taxon>
        <taxon>Pseudomonadati</taxon>
        <taxon>Pseudomonadota</taxon>
        <taxon>Gammaproteobacteria</taxon>
        <taxon>Alteromonadales</taxon>
        <taxon>Shewanellaceae</taxon>
        <taxon>Shewanella</taxon>
    </lineage>
</organism>
<accession>Q07X44</accession>
<keyword id="KW-0028">Amino-acid biosynthesis</keyword>
<keyword id="KW-0057">Aromatic amino acid biosynthesis</keyword>
<keyword id="KW-0456">Lyase</keyword>
<keyword id="KW-1185">Reference proteome</keyword>